<comment type="function">
    <text evidence="1">NDH-1 shuttles electrons from NADH, via FMN and iron-sulfur (Fe-S) centers, to quinones in the respiratory chain. The immediate electron acceptor for the enzyme in this species is believed to be ubiquinone. Couples the redox reaction to proton translocation (for every two electrons transferred, four hydrogen ions are translocated across the cytoplasmic membrane), and thus conserves the redox energy in a proton gradient.</text>
</comment>
<comment type="catalytic activity">
    <reaction evidence="1">
        <text>a quinone + NADH + 5 H(+)(in) = a quinol + NAD(+) + 4 H(+)(out)</text>
        <dbReference type="Rhea" id="RHEA:57888"/>
        <dbReference type="ChEBI" id="CHEBI:15378"/>
        <dbReference type="ChEBI" id="CHEBI:24646"/>
        <dbReference type="ChEBI" id="CHEBI:57540"/>
        <dbReference type="ChEBI" id="CHEBI:57945"/>
        <dbReference type="ChEBI" id="CHEBI:132124"/>
    </reaction>
</comment>
<comment type="subunit">
    <text evidence="1">NDH-1 is composed of 14 different subunits. Subunits NuoA, H, J, K, L, M, N constitute the membrane sector of the complex.</text>
</comment>
<comment type="subcellular location">
    <subcellularLocation>
        <location evidence="1">Cell inner membrane</location>
        <topology evidence="1">Multi-pass membrane protein</topology>
    </subcellularLocation>
</comment>
<comment type="similarity">
    <text evidence="1">Belongs to the complex I subunit 4L family.</text>
</comment>
<name>NUOK_BURCJ</name>
<feature type="chain" id="PRO_0000389987" description="NADH-quinone oxidoreductase subunit K">
    <location>
        <begin position="1"/>
        <end position="101"/>
    </location>
</feature>
<feature type="transmembrane region" description="Helical" evidence="1">
    <location>
        <begin position="4"/>
        <end position="24"/>
    </location>
</feature>
<feature type="transmembrane region" description="Helical" evidence="1">
    <location>
        <begin position="30"/>
        <end position="50"/>
    </location>
</feature>
<feature type="transmembrane region" description="Helical" evidence="1">
    <location>
        <begin position="61"/>
        <end position="81"/>
    </location>
</feature>
<accession>B4E5L2</accession>
<reference key="1">
    <citation type="journal article" date="2009" name="J. Bacteriol.">
        <title>The genome of Burkholderia cenocepacia J2315, an epidemic pathogen of cystic fibrosis patients.</title>
        <authorList>
            <person name="Holden M.T."/>
            <person name="Seth-Smith H.M."/>
            <person name="Crossman L.C."/>
            <person name="Sebaihia M."/>
            <person name="Bentley S.D."/>
            <person name="Cerdeno-Tarraga A.M."/>
            <person name="Thomson N.R."/>
            <person name="Bason N."/>
            <person name="Quail M.A."/>
            <person name="Sharp S."/>
            <person name="Cherevach I."/>
            <person name="Churcher C."/>
            <person name="Goodhead I."/>
            <person name="Hauser H."/>
            <person name="Holroyd N."/>
            <person name="Mungall K."/>
            <person name="Scott P."/>
            <person name="Walker D."/>
            <person name="White B."/>
            <person name="Rose H."/>
            <person name="Iversen P."/>
            <person name="Mil-Homens D."/>
            <person name="Rocha E.P."/>
            <person name="Fialho A.M."/>
            <person name="Baldwin A."/>
            <person name="Dowson C."/>
            <person name="Barrell B.G."/>
            <person name="Govan J.R."/>
            <person name="Vandamme P."/>
            <person name="Hart C.A."/>
            <person name="Mahenthiralingam E."/>
            <person name="Parkhill J."/>
        </authorList>
    </citation>
    <scope>NUCLEOTIDE SEQUENCE [LARGE SCALE GENOMIC DNA]</scope>
    <source>
        <strain>ATCC BAA-245 / DSM 16553 / LMG 16656 / NCTC 13227 / J2315 / CF5610</strain>
    </source>
</reference>
<organism>
    <name type="scientific">Burkholderia cenocepacia (strain ATCC BAA-245 / DSM 16553 / LMG 16656 / NCTC 13227 / J2315 / CF5610)</name>
    <name type="common">Burkholderia cepacia (strain J2315)</name>
    <dbReference type="NCBI Taxonomy" id="216591"/>
    <lineage>
        <taxon>Bacteria</taxon>
        <taxon>Pseudomonadati</taxon>
        <taxon>Pseudomonadota</taxon>
        <taxon>Betaproteobacteria</taxon>
        <taxon>Burkholderiales</taxon>
        <taxon>Burkholderiaceae</taxon>
        <taxon>Burkholderia</taxon>
        <taxon>Burkholderia cepacia complex</taxon>
    </lineage>
</organism>
<keyword id="KW-0997">Cell inner membrane</keyword>
<keyword id="KW-1003">Cell membrane</keyword>
<keyword id="KW-0472">Membrane</keyword>
<keyword id="KW-0520">NAD</keyword>
<keyword id="KW-0874">Quinone</keyword>
<keyword id="KW-1278">Translocase</keyword>
<keyword id="KW-0812">Transmembrane</keyword>
<keyword id="KW-1133">Transmembrane helix</keyword>
<keyword id="KW-0813">Transport</keyword>
<keyword id="KW-0830">Ubiquinone</keyword>
<gene>
    <name evidence="1" type="primary">nuoK</name>
    <name type="ordered locus">BceJ2315_22940</name>
    <name type="ORF">BCAL2334</name>
</gene>
<dbReference type="EC" id="7.1.1.-" evidence="1"/>
<dbReference type="EMBL" id="AM747720">
    <property type="protein sequence ID" value="CAR52635.1"/>
    <property type="molecule type" value="Genomic_DNA"/>
</dbReference>
<dbReference type="RefSeq" id="WP_006478272.1">
    <property type="nucleotide sequence ID" value="NC_011000.1"/>
</dbReference>
<dbReference type="SMR" id="B4E5L2"/>
<dbReference type="GeneID" id="93191319"/>
<dbReference type="KEGG" id="bcj:BCAL2334"/>
<dbReference type="eggNOG" id="COG0713">
    <property type="taxonomic scope" value="Bacteria"/>
</dbReference>
<dbReference type="HOGENOM" id="CLU_144724_2_0_4"/>
<dbReference type="BioCyc" id="BCEN216591:G1G1V-2577-MONOMER"/>
<dbReference type="Proteomes" id="UP000001035">
    <property type="component" value="Chromosome 1"/>
</dbReference>
<dbReference type="GO" id="GO:0030964">
    <property type="term" value="C:NADH dehydrogenase complex"/>
    <property type="evidence" value="ECO:0007669"/>
    <property type="project" value="TreeGrafter"/>
</dbReference>
<dbReference type="GO" id="GO:0005886">
    <property type="term" value="C:plasma membrane"/>
    <property type="evidence" value="ECO:0007669"/>
    <property type="project" value="UniProtKB-SubCell"/>
</dbReference>
<dbReference type="GO" id="GO:0050136">
    <property type="term" value="F:NADH:ubiquinone reductase (non-electrogenic) activity"/>
    <property type="evidence" value="ECO:0007669"/>
    <property type="project" value="UniProtKB-UniRule"/>
</dbReference>
<dbReference type="GO" id="GO:0048038">
    <property type="term" value="F:quinone binding"/>
    <property type="evidence" value="ECO:0007669"/>
    <property type="project" value="UniProtKB-KW"/>
</dbReference>
<dbReference type="GO" id="GO:0042773">
    <property type="term" value="P:ATP synthesis coupled electron transport"/>
    <property type="evidence" value="ECO:0007669"/>
    <property type="project" value="InterPro"/>
</dbReference>
<dbReference type="FunFam" id="1.10.287.3510:FF:000001">
    <property type="entry name" value="NADH-quinone oxidoreductase subunit K"/>
    <property type="match status" value="1"/>
</dbReference>
<dbReference type="Gene3D" id="1.10.287.3510">
    <property type="match status" value="1"/>
</dbReference>
<dbReference type="HAMAP" id="MF_01456">
    <property type="entry name" value="NDH1_NuoK"/>
    <property type="match status" value="1"/>
</dbReference>
<dbReference type="InterPro" id="IPR001133">
    <property type="entry name" value="NADH_UbQ_OxRdtase_chain4L/K"/>
</dbReference>
<dbReference type="InterPro" id="IPR039428">
    <property type="entry name" value="NUOK/Mnh_C1-like"/>
</dbReference>
<dbReference type="NCBIfam" id="NF004320">
    <property type="entry name" value="PRK05715.1-2"/>
    <property type="match status" value="1"/>
</dbReference>
<dbReference type="NCBIfam" id="NF004321">
    <property type="entry name" value="PRK05715.1-3"/>
    <property type="match status" value="1"/>
</dbReference>
<dbReference type="NCBIfam" id="NF004323">
    <property type="entry name" value="PRK05715.1-5"/>
    <property type="match status" value="1"/>
</dbReference>
<dbReference type="PANTHER" id="PTHR11434:SF21">
    <property type="entry name" value="NADH DEHYDROGENASE SUBUNIT 4L-RELATED"/>
    <property type="match status" value="1"/>
</dbReference>
<dbReference type="PANTHER" id="PTHR11434">
    <property type="entry name" value="NADH-UBIQUINONE OXIDOREDUCTASE SUBUNIT ND4L"/>
    <property type="match status" value="1"/>
</dbReference>
<dbReference type="Pfam" id="PF00420">
    <property type="entry name" value="Oxidored_q2"/>
    <property type="match status" value="1"/>
</dbReference>
<protein>
    <recommendedName>
        <fullName evidence="1">NADH-quinone oxidoreductase subunit K</fullName>
        <ecNumber evidence="1">7.1.1.-</ecNumber>
    </recommendedName>
    <alternativeName>
        <fullName evidence="1">NADH dehydrogenase I subunit K</fullName>
    </alternativeName>
    <alternativeName>
        <fullName evidence="1">NDH-1 subunit K</fullName>
    </alternativeName>
</protein>
<proteinExistence type="inferred from homology"/>
<sequence length="101" mass="11086">MLTLAHYLVLGAILFAIAIVGIFLNRRNVIIILMSIELMLLAVNTNFVAFSHYLGDVHGQIFVFFVLTVAAAEAAIGLAILVTLFRKLDTINVEDLDQLKG</sequence>
<evidence type="ECO:0000255" key="1">
    <source>
        <dbReference type="HAMAP-Rule" id="MF_01456"/>
    </source>
</evidence>